<evidence type="ECO:0000250" key="1">
    <source>
        <dbReference type="UniProtKB" id="P0A6F1"/>
    </source>
</evidence>
<evidence type="ECO:0000255" key="2"/>
<evidence type="ECO:0000255" key="3">
    <source>
        <dbReference type="PROSITE-ProRule" id="PRU00605"/>
    </source>
</evidence>
<evidence type="ECO:0000269" key="4">
    <source>
    </source>
</evidence>
<evidence type="ECO:0000269" key="5">
    <source>
    </source>
</evidence>
<evidence type="ECO:0000303" key="6">
    <source>
    </source>
</evidence>
<evidence type="ECO:0000305" key="7"/>
<evidence type="ECO:0000305" key="8">
    <source>
    </source>
</evidence>
<organism>
    <name type="scientific">Arabidopsis thaliana</name>
    <name type="common">Mouse-ear cress</name>
    <dbReference type="NCBI Taxonomy" id="3702"/>
    <lineage>
        <taxon>Eukaryota</taxon>
        <taxon>Viridiplantae</taxon>
        <taxon>Streptophyta</taxon>
        <taxon>Embryophyta</taxon>
        <taxon>Tracheophyta</taxon>
        <taxon>Spermatophyta</taxon>
        <taxon>Magnoliopsida</taxon>
        <taxon>eudicotyledons</taxon>
        <taxon>Gunneridae</taxon>
        <taxon>Pentapetalae</taxon>
        <taxon>rosids</taxon>
        <taxon>malvids</taxon>
        <taxon>Brassicales</taxon>
        <taxon>Brassicaceae</taxon>
        <taxon>Camelineae</taxon>
        <taxon>Arabidopsis</taxon>
    </lineage>
</organism>
<dbReference type="EC" id="6.3.5.5" evidence="8"/>
<dbReference type="EMBL" id="AB018114">
    <property type="protein sequence ID" value="BAB02698.1"/>
    <property type="molecule type" value="Genomic_DNA"/>
</dbReference>
<dbReference type="EMBL" id="CP002686">
    <property type="protein sequence ID" value="AEE77358.1"/>
    <property type="molecule type" value="Genomic_DNA"/>
</dbReference>
<dbReference type="EMBL" id="AY046004">
    <property type="protein sequence ID" value="AAK76678.1"/>
    <property type="molecule type" value="mRNA"/>
</dbReference>
<dbReference type="EMBL" id="AY079315">
    <property type="protein sequence ID" value="AAL85046.1"/>
    <property type="molecule type" value="mRNA"/>
</dbReference>
<dbReference type="EMBL" id="U73175">
    <property type="protein sequence ID" value="AAC25961.1"/>
    <property type="status" value="ALT_INIT"/>
    <property type="molecule type" value="mRNA"/>
</dbReference>
<dbReference type="RefSeq" id="NP_566824.1">
    <molecule id="Q9LVW7-1"/>
    <property type="nucleotide sequence ID" value="NM_113690.3"/>
</dbReference>
<dbReference type="SMR" id="Q9LVW7"/>
<dbReference type="BioGRID" id="7726">
    <property type="interactions" value="8"/>
</dbReference>
<dbReference type="FunCoup" id="Q9LVW7">
    <property type="interactions" value="1445"/>
</dbReference>
<dbReference type="IntAct" id="Q9LVW7">
    <property type="interactions" value="2"/>
</dbReference>
<dbReference type="STRING" id="3702.Q9LVW7"/>
<dbReference type="MEROPS" id="C26.A04"/>
<dbReference type="PaxDb" id="3702-AT3G27740.1"/>
<dbReference type="ProteomicsDB" id="222784">
    <molecule id="Q9LVW7-1"/>
</dbReference>
<dbReference type="EnsemblPlants" id="AT3G27740.1">
    <molecule id="Q9LVW7-1"/>
    <property type="protein sequence ID" value="AT3G27740.1"/>
    <property type="gene ID" value="AT3G27740"/>
</dbReference>
<dbReference type="GeneID" id="822396"/>
<dbReference type="Gramene" id="AT3G27740.1">
    <molecule id="Q9LVW7-1"/>
    <property type="protein sequence ID" value="AT3G27740.1"/>
    <property type="gene ID" value="AT3G27740"/>
</dbReference>
<dbReference type="KEGG" id="ath:AT3G27740"/>
<dbReference type="Araport" id="AT3G27740"/>
<dbReference type="TAIR" id="AT3G27740">
    <property type="gene designation" value="CARA"/>
</dbReference>
<dbReference type="eggNOG" id="KOG0370">
    <property type="taxonomic scope" value="Eukaryota"/>
</dbReference>
<dbReference type="HOGENOM" id="CLU_035901_2_1_1"/>
<dbReference type="InParanoid" id="Q9LVW7"/>
<dbReference type="OMA" id="CFSVQYH"/>
<dbReference type="PhylomeDB" id="Q9LVW7"/>
<dbReference type="BioCyc" id="ARA:AT3G27740-MONOMER"/>
<dbReference type="UniPathway" id="UPA00068">
    <property type="reaction ID" value="UER00171"/>
</dbReference>
<dbReference type="UniPathway" id="UPA00070">
    <property type="reaction ID" value="UER00115"/>
</dbReference>
<dbReference type="CD-CODE" id="4299E36E">
    <property type="entry name" value="Nucleolus"/>
</dbReference>
<dbReference type="PRO" id="PR:Q9LVW7"/>
<dbReference type="Proteomes" id="UP000006548">
    <property type="component" value="Chromosome 3"/>
</dbReference>
<dbReference type="ExpressionAtlas" id="Q9LVW7">
    <property type="expression patterns" value="baseline and differential"/>
</dbReference>
<dbReference type="GO" id="GO:0005951">
    <property type="term" value="C:carbamoyl-phosphate synthase complex"/>
    <property type="evidence" value="ECO:0000314"/>
    <property type="project" value="TAIR"/>
</dbReference>
<dbReference type="GO" id="GO:0009507">
    <property type="term" value="C:chloroplast"/>
    <property type="evidence" value="ECO:0007005"/>
    <property type="project" value="TAIR"/>
</dbReference>
<dbReference type="GO" id="GO:0009570">
    <property type="term" value="C:chloroplast stroma"/>
    <property type="evidence" value="ECO:0007005"/>
    <property type="project" value="TAIR"/>
</dbReference>
<dbReference type="GO" id="GO:0005524">
    <property type="term" value="F:ATP binding"/>
    <property type="evidence" value="ECO:0007669"/>
    <property type="project" value="UniProtKB-KW"/>
</dbReference>
<dbReference type="GO" id="GO:0004088">
    <property type="term" value="F:carbamoyl-phosphate synthase (glutamine-hydrolyzing) activity"/>
    <property type="evidence" value="ECO:0000314"/>
    <property type="project" value="TAIR"/>
</dbReference>
<dbReference type="GO" id="GO:0004359">
    <property type="term" value="F:glutaminase activity"/>
    <property type="evidence" value="ECO:0007669"/>
    <property type="project" value="RHEA"/>
</dbReference>
<dbReference type="GO" id="GO:0006207">
    <property type="term" value="P:'de novo' pyrimidine nucleobase biosynthetic process"/>
    <property type="evidence" value="ECO:0007669"/>
    <property type="project" value="InterPro"/>
</dbReference>
<dbReference type="GO" id="GO:0044205">
    <property type="term" value="P:'de novo' UMP biosynthetic process"/>
    <property type="evidence" value="ECO:0007669"/>
    <property type="project" value="UniProtKB-UniPathway"/>
</dbReference>
<dbReference type="GO" id="GO:0016036">
    <property type="term" value="P:cellular response to phosphate starvation"/>
    <property type="evidence" value="ECO:0000270"/>
    <property type="project" value="TAIR"/>
</dbReference>
<dbReference type="GO" id="GO:0006541">
    <property type="term" value="P:glutamine metabolic process"/>
    <property type="evidence" value="ECO:0007669"/>
    <property type="project" value="InterPro"/>
</dbReference>
<dbReference type="GO" id="GO:0006526">
    <property type="term" value="P:L-arginine biosynthetic process"/>
    <property type="evidence" value="ECO:0007669"/>
    <property type="project" value="UniProtKB-UniPathway"/>
</dbReference>
<dbReference type="CDD" id="cd01744">
    <property type="entry name" value="GATase1_CPSase"/>
    <property type="match status" value="1"/>
</dbReference>
<dbReference type="FunFam" id="3.50.30.20:FF:000001">
    <property type="entry name" value="Carbamoyl-phosphate synthase small chain"/>
    <property type="match status" value="1"/>
</dbReference>
<dbReference type="FunFam" id="3.40.50.880:FF:000034">
    <property type="entry name" value="carbamoyl-phosphate synthase small chain, chloroplastic"/>
    <property type="match status" value="1"/>
</dbReference>
<dbReference type="Gene3D" id="3.40.50.880">
    <property type="match status" value="1"/>
</dbReference>
<dbReference type="Gene3D" id="3.50.30.20">
    <property type="entry name" value="Carbamoyl-phosphate synthase small subunit, N-terminal domain"/>
    <property type="match status" value="1"/>
</dbReference>
<dbReference type="HAMAP" id="MF_01209">
    <property type="entry name" value="CPSase_S_chain"/>
    <property type="match status" value="1"/>
</dbReference>
<dbReference type="InterPro" id="IPR006274">
    <property type="entry name" value="CarbamoylP_synth_ssu"/>
</dbReference>
<dbReference type="InterPro" id="IPR002474">
    <property type="entry name" value="CarbamoylP_synth_ssu_N"/>
</dbReference>
<dbReference type="InterPro" id="IPR036480">
    <property type="entry name" value="CarbP_synth_ssu_N_sf"/>
</dbReference>
<dbReference type="InterPro" id="IPR029062">
    <property type="entry name" value="Class_I_gatase-like"/>
</dbReference>
<dbReference type="InterPro" id="IPR035686">
    <property type="entry name" value="CPSase_GATase1"/>
</dbReference>
<dbReference type="InterPro" id="IPR017926">
    <property type="entry name" value="GATASE"/>
</dbReference>
<dbReference type="NCBIfam" id="TIGR01368">
    <property type="entry name" value="CPSaseIIsmall"/>
    <property type="match status" value="1"/>
</dbReference>
<dbReference type="NCBIfam" id="NF009475">
    <property type="entry name" value="PRK12838.1"/>
    <property type="match status" value="1"/>
</dbReference>
<dbReference type="PANTHER" id="PTHR11405:SF4">
    <property type="entry name" value="CARBAMOYL-PHOSPHATE SYNTHASE ARGININE-SPECIFIC SMALL CHAIN"/>
    <property type="match status" value="1"/>
</dbReference>
<dbReference type="PANTHER" id="PTHR11405">
    <property type="entry name" value="CARBAMOYLTRANSFERASE FAMILY MEMBER"/>
    <property type="match status" value="1"/>
</dbReference>
<dbReference type="Pfam" id="PF00988">
    <property type="entry name" value="CPSase_sm_chain"/>
    <property type="match status" value="1"/>
</dbReference>
<dbReference type="Pfam" id="PF00117">
    <property type="entry name" value="GATase"/>
    <property type="match status" value="1"/>
</dbReference>
<dbReference type="PRINTS" id="PR00097">
    <property type="entry name" value="ANTSNTHASEII"/>
</dbReference>
<dbReference type="PRINTS" id="PR00099">
    <property type="entry name" value="CPSGATASE"/>
</dbReference>
<dbReference type="PRINTS" id="PR00096">
    <property type="entry name" value="GATASE"/>
</dbReference>
<dbReference type="SMART" id="SM01097">
    <property type="entry name" value="CPSase_sm_chain"/>
    <property type="match status" value="1"/>
</dbReference>
<dbReference type="SUPFAM" id="SSF52021">
    <property type="entry name" value="Carbamoyl phosphate synthetase, small subunit N-terminal domain"/>
    <property type="match status" value="1"/>
</dbReference>
<dbReference type="SUPFAM" id="SSF52317">
    <property type="entry name" value="Class I glutamine amidotransferase-like"/>
    <property type="match status" value="1"/>
</dbReference>
<dbReference type="PROSITE" id="PS51273">
    <property type="entry name" value="GATASE_TYPE_1"/>
    <property type="match status" value="1"/>
</dbReference>
<reference key="1">
    <citation type="journal article" date="2000" name="DNA Res.">
        <title>Structural analysis of Arabidopsis thaliana chromosome 3. I. Sequence features of the regions of 4,504,864 bp covered by sixty P1 and TAC clones.</title>
        <authorList>
            <person name="Sato S."/>
            <person name="Nakamura Y."/>
            <person name="Kaneko T."/>
            <person name="Katoh T."/>
            <person name="Asamizu E."/>
            <person name="Tabata S."/>
        </authorList>
    </citation>
    <scope>NUCLEOTIDE SEQUENCE [LARGE SCALE GENOMIC DNA]</scope>
    <source>
        <strain>cv. Columbia</strain>
    </source>
</reference>
<reference key="2">
    <citation type="journal article" date="2017" name="Plant J.">
        <title>Araport11: a complete reannotation of the Arabidopsis thaliana reference genome.</title>
        <authorList>
            <person name="Cheng C.Y."/>
            <person name="Krishnakumar V."/>
            <person name="Chan A.P."/>
            <person name="Thibaud-Nissen F."/>
            <person name="Schobel S."/>
            <person name="Town C.D."/>
        </authorList>
    </citation>
    <scope>GENOME REANNOTATION</scope>
    <source>
        <strain>cv. Columbia</strain>
    </source>
</reference>
<reference key="3">
    <citation type="journal article" date="2003" name="Science">
        <title>Empirical analysis of transcriptional activity in the Arabidopsis genome.</title>
        <authorList>
            <person name="Yamada K."/>
            <person name="Lim J."/>
            <person name="Dale J.M."/>
            <person name="Chen H."/>
            <person name="Shinn P."/>
            <person name="Palm C.J."/>
            <person name="Southwick A.M."/>
            <person name="Wu H.C."/>
            <person name="Kim C.J."/>
            <person name="Nguyen M."/>
            <person name="Pham P.K."/>
            <person name="Cheuk R.F."/>
            <person name="Karlin-Newmann G."/>
            <person name="Liu S.X."/>
            <person name="Lam B."/>
            <person name="Sakano H."/>
            <person name="Wu T."/>
            <person name="Yu G."/>
            <person name="Miranda M."/>
            <person name="Quach H.L."/>
            <person name="Tripp M."/>
            <person name="Chang C.H."/>
            <person name="Lee J.M."/>
            <person name="Toriumi M.J."/>
            <person name="Chan M.M."/>
            <person name="Tang C.C."/>
            <person name="Onodera C.S."/>
            <person name="Deng J.M."/>
            <person name="Akiyama K."/>
            <person name="Ansari Y."/>
            <person name="Arakawa T."/>
            <person name="Banh J."/>
            <person name="Banno F."/>
            <person name="Bowser L."/>
            <person name="Brooks S.Y."/>
            <person name="Carninci P."/>
            <person name="Chao Q."/>
            <person name="Choy N."/>
            <person name="Enju A."/>
            <person name="Goldsmith A.D."/>
            <person name="Gurjal M."/>
            <person name="Hansen N.F."/>
            <person name="Hayashizaki Y."/>
            <person name="Johnson-Hopson C."/>
            <person name="Hsuan V.W."/>
            <person name="Iida K."/>
            <person name="Karnes M."/>
            <person name="Khan S."/>
            <person name="Koesema E."/>
            <person name="Ishida J."/>
            <person name="Jiang P.X."/>
            <person name="Jones T."/>
            <person name="Kawai J."/>
            <person name="Kamiya A."/>
            <person name="Meyers C."/>
            <person name="Nakajima M."/>
            <person name="Narusaka M."/>
            <person name="Seki M."/>
            <person name="Sakurai T."/>
            <person name="Satou M."/>
            <person name="Tamse R."/>
            <person name="Vaysberg M."/>
            <person name="Wallender E.K."/>
            <person name="Wong C."/>
            <person name="Yamamura Y."/>
            <person name="Yuan S."/>
            <person name="Shinozaki K."/>
            <person name="Davis R.W."/>
            <person name="Theologis A."/>
            <person name="Ecker J.R."/>
        </authorList>
    </citation>
    <scope>NUCLEOTIDE SEQUENCE [LARGE SCALE MRNA]</scope>
    <source>
        <strain>cv. Columbia</strain>
    </source>
</reference>
<reference key="4">
    <citation type="online journal article" date="1998" name="Plant Gene Register">
        <title>Characterization of a cDNA encoding the small subunit of Arabidopsis carbamoyl phosphate synthetase.</title>
        <authorList>
            <person name="Brandenburg S.A."/>
            <person name="Williamson C.L."/>
            <person name="Slocum R.D."/>
        </authorList>
        <locator>PGR98-087</locator>
    </citation>
    <scope>NUCLEOTIDE SEQUENCE [MRNA] OF 2-430</scope>
    <source>
        <strain>cv. Columbia</strain>
    </source>
</reference>
<reference key="5">
    <citation type="journal article" date="2005" name="Plant Physiol. Biochem.">
        <title>Effects of phosphate limitation on expression of genes involved in pyrimidine synthesis and salvaging in Arabidopsis.</title>
        <authorList>
            <person name="Hewitt M.M."/>
            <person name="Carr J.M."/>
            <person name="Williamson C.L."/>
            <person name="Slocum R.D."/>
        </authorList>
    </citation>
    <scope>INDUCTION</scope>
</reference>
<reference key="6">
    <citation type="journal article" date="2011" name="Plant J.">
        <title>Analysis of ven3 and ven6 reticulate mutants reveals the importance of arginine biosynthesis in Arabidopsis leaf development.</title>
        <authorList>
            <person name="Molla-Morales A."/>
            <person name="Sarmiento-Manus R."/>
            <person name="Robles P."/>
            <person name="Quesada V."/>
            <person name="Perez-Perez J.M."/>
            <person name="Gonzalez-Bayon R."/>
            <person name="Hannah M.A."/>
            <person name="Willmitzer L."/>
            <person name="Ponce M.R."/>
            <person name="Micol J.L."/>
        </authorList>
    </citation>
    <scope>FUNCTION</scope>
    <scope>CATALYTIC ACTIVITY</scope>
    <scope>MUTAGENESIS OF HIS-410</scope>
    <scope>DISRUPTION PHENOTYPE</scope>
    <source>
        <strain>cv. Landsberg erecta</strain>
    </source>
</reference>
<proteinExistence type="evidence at protein level"/>
<comment type="function">
    <text evidence="5">Small subunit of the arginine-specific carbamoyl phosphate synthase (CPSase). CPSase catalyzes the formation of carbamoyl phosphate from the ammonia moiety of glutamine, carbonate, and phosphate donated by ATP, the first step of the arginine biosynthetic pathway. The small subunit (glutamine amidotransferase) binds and cleaves glutamine to supply the large subunit with the substrate ammonia.</text>
</comment>
<comment type="catalytic activity">
    <reaction evidence="8">
        <text>hydrogencarbonate + L-glutamine + 2 ATP + H2O = carbamoyl phosphate + L-glutamate + 2 ADP + phosphate + 2 H(+)</text>
        <dbReference type="Rhea" id="RHEA:18633"/>
        <dbReference type="ChEBI" id="CHEBI:15377"/>
        <dbReference type="ChEBI" id="CHEBI:15378"/>
        <dbReference type="ChEBI" id="CHEBI:17544"/>
        <dbReference type="ChEBI" id="CHEBI:29985"/>
        <dbReference type="ChEBI" id="CHEBI:30616"/>
        <dbReference type="ChEBI" id="CHEBI:43474"/>
        <dbReference type="ChEBI" id="CHEBI:58228"/>
        <dbReference type="ChEBI" id="CHEBI:58359"/>
        <dbReference type="ChEBI" id="CHEBI:456216"/>
        <dbReference type="EC" id="6.3.5.5"/>
    </reaction>
    <physiologicalReaction direction="right-to-left" evidence="8">
        <dbReference type="Rhea" id="RHEA:18635"/>
    </physiologicalReaction>
</comment>
<comment type="catalytic activity">
    <molecule>Carbamoyl phosphate synthase small chain, chloroplastic</molecule>
    <reaction evidence="1">
        <text>L-glutamine + H2O = L-glutamate + NH4(+)</text>
        <dbReference type="Rhea" id="RHEA:15889"/>
        <dbReference type="ChEBI" id="CHEBI:15377"/>
        <dbReference type="ChEBI" id="CHEBI:28938"/>
        <dbReference type="ChEBI" id="CHEBI:29985"/>
        <dbReference type="ChEBI" id="CHEBI:58359"/>
    </reaction>
</comment>
<comment type="pathway">
    <text>Amino-acid biosynthesis; L-arginine biosynthesis; carbamoyl phosphate from bicarbonate: step 1/1.</text>
</comment>
<comment type="pathway">
    <text>Pyrimidine metabolism; UMP biosynthesis via de novo pathway; (S)-dihydroorotate from bicarbonate: step 1/3.</text>
</comment>
<comment type="subunit">
    <text evidence="1">Heterodimer composed of 2 chains; the small (or glutamine) chain promotes the hydrolysis of glutamine to ammonia, which is used by the large (or ammonia) chain to synthesize carbamoyl phosphate.</text>
</comment>
<comment type="subcellular location">
    <subcellularLocation>
        <location evidence="7">Plastid</location>
        <location evidence="7">Chloroplast</location>
    </subcellularLocation>
</comment>
<comment type="alternative products">
    <event type="alternative splicing"/>
    <isoform>
        <id>Q9LVW7-1</id>
        <name>1</name>
        <sequence type="displayed"/>
    </isoform>
    <text>A number of isoforms are produced. According to EST sequences.</text>
</comment>
<comment type="induction">
    <text evidence="4">By phosphate starvation in shoot.</text>
</comment>
<comment type="disruption phenotype">
    <text evidence="5">Reduced plant size. Reticulate leaves with reduced number of palissade mesophyll cells.</text>
</comment>
<comment type="miscellaneous">
    <text evidence="8">The ven6-1 phenotype is rescued by exogenous application of citrulline, an arginine precursor.</text>
</comment>
<comment type="similarity">
    <text evidence="7">Belongs to the CarA family.</text>
</comment>
<comment type="sequence caution" evidence="7">
    <conflict type="erroneous initiation">
        <sequence resource="EMBL-CDS" id="AAC25961"/>
    </conflict>
    <text>Truncated N-terminus.</text>
</comment>
<sequence>MAMATRTLGFVLPTSLSSQPSFDRRGGGFRVSVIRCSTSPLTFPTSGVVEKPWTSYNARLVLEDGSIWPAKSFGAPGTRIAELVFNTSLTGYQEILTDPSYAGQFVLMTNPQIGNTGVNPDDEESGQCFLTGLVIRNLSISTSNWRCTKTLADYLTERDIMGVYDLDTRAITRRLREDGSLIGVLSTEQSKTDDELLQMSRSWDIVGIDLISDVSCKSPYEWVDKTNAEWDFNTNSRDGKSYKVIAYDFGIKQNILRRLSSYGCQITVVPSTFPAAEALKMNPDGILFSNGPGDPSAVPYAVETVKELLGKVPVYGICMGHQLLGQALGGKTFKMKFGHHGGNHPVRNNRTGQVEISAQNHNYAVDPASLPGGVEVTHVNLNDGSCAGLSFPEMNVMSLQYHPEASPGPHDSDNAFREFIELMKRSKQSS</sequence>
<gene>
    <name type="primary">CARA</name>
    <name evidence="6" type="synonym">VEN6</name>
    <name type="ordered locus">At3g27740</name>
    <name type="ORF">MGF10.15</name>
</gene>
<accession>Q9LVW7</accession>
<accession>O24447</accession>
<keyword id="KW-0025">Alternative splicing</keyword>
<keyword id="KW-0028">Amino-acid biosynthesis</keyword>
<keyword id="KW-0055">Arginine biosynthesis</keyword>
<keyword id="KW-0067">ATP-binding</keyword>
<keyword id="KW-0150">Chloroplast</keyword>
<keyword id="KW-0315">Glutamine amidotransferase</keyword>
<keyword id="KW-0436">Ligase</keyword>
<keyword id="KW-0547">Nucleotide-binding</keyword>
<keyword id="KW-0934">Plastid</keyword>
<keyword id="KW-0665">Pyrimidine biosynthesis</keyword>
<keyword id="KW-1185">Reference proteome</keyword>
<keyword id="KW-0809">Transit peptide</keyword>
<name>CARA_ARATH</name>
<feature type="transit peptide" description="Chloroplast" evidence="2">
    <location>
        <begin position="1"/>
        <end position="35"/>
    </location>
</feature>
<feature type="chain" id="PRO_0000423074" description="Carbamoyl phosphate synthase small chain, chloroplastic">
    <location>
        <begin position="36"/>
        <end position="430"/>
    </location>
</feature>
<feature type="domain" description="Glutamine amidotransferase type-1" evidence="3">
    <location>
        <begin position="243"/>
        <end position="429"/>
    </location>
</feature>
<feature type="active site" description="Nucleophile" evidence="3">
    <location>
        <position position="318"/>
    </location>
</feature>
<feature type="active site" evidence="3">
    <location>
        <position position="402"/>
    </location>
</feature>
<feature type="active site" evidence="3">
    <location>
        <position position="404"/>
    </location>
</feature>
<feature type="mutagenesis site" description="In ven6-1; reticulate leaf phenotype." evidence="5">
    <original>H</original>
    <variation>Y</variation>
    <location>
        <position position="410"/>
    </location>
</feature>
<protein>
    <recommendedName>
        <fullName>Carbamoyl phosphate synthase small chain, chloroplastic</fullName>
        <ecNumber evidence="8">6.3.5.5</ecNumber>
    </recommendedName>
    <alternativeName>
        <fullName evidence="6">Carbamoyl phosphate synthetase glutamine chain</fullName>
    </alternativeName>
    <alternativeName>
        <fullName evidence="6">Protein VENOSA 6</fullName>
    </alternativeName>
</protein>